<sequence length="491" mass="52483">MANLTGNVYIDGLWLPGHGAPFESVQPVTGETVWDGNAASLEDVDAAVREARKAFLAWRRKSLAERQAVIEAFGELLEANKEELAHQIGLETGKPLWESRTEVAAMMGKIPISVKAYNERTGHTESDVAGGHAVLRHRPHGVVAVFGPYNFPGHLPNGHIVPALLAGNTVVFKPSELTPGVAELTVRLWEKAGLPDGVINLVQGGSDTGKCLARHSLIDGLFFTGSSTVGHLLHEQFGGQPEKILALEMGGNNPLIVQNVSDLDGAVHHALQSAFLSAGQRCTCARRLLVPKGKKGDEFLARLVEVAARITVAEFDADPQPFMGSVISAEAANQLLKAQAAMLEKGATSLLEMKQLKPDTGLLSPGIVDATGIELEDQEFFGPLLTVYRYKGFDEALELANNTRYGLSAGILSDDRKLYNRLVEEVRAGIVNWNRPLTGASSAAPFGGVGASGNHRPSAYYAADYCAWPMASLEAGKSELPDSLAPGLNFD</sequence>
<dbReference type="EC" id="1.2.1.71" evidence="1"/>
<dbReference type="EMBL" id="CP000514">
    <property type="protein sequence ID" value="ABM20387.1"/>
    <property type="molecule type" value="Genomic_DNA"/>
</dbReference>
<dbReference type="RefSeq" id="WP_011786728.1">
    <property type="nucleotide sequence ID" value="NC_008740.1"/>
</dbReference>
<dbReference type="PDB" id="5U0L">
    <property type="method" value="X-ray"/>
    <property type="resolution" value="2.29 A"/>
    <property type="chains" value="A/B=2-491"/>
</dbReference>
<dbReference type="PDB" id="5U0M">
    <property type="method" value="X-ray"/>
    <property type="resolution" value="3.08 A"/>
    <property type="chains" value="A/B=2-491"/>
</dbReference>
<dbReference type="PDBsum" id="5U0L"/>
<dbReference type="PDBsum" id="5U0M"/>
<dbReference type="SMR" id="A1U5W8"/>
<dbReference type="STRING" id="351348.Maqu_3316"/>
<dbReference type="KEGG" id="maq:Maqu_3316"/>
<dbReference type="eggNOG" id="COG1012">
    <property type="taxonomic scope" value="Bacteria"/>
</dbReference>
<dbReference type="HOGENOM" id="CLU_005391_1_0_6"/>
<dbReference type="OrthoDB" id="9812625at2"/>
<dbReference type="UniPathway" id="UPA00185">
    <property type="reaction ID" value="UER00282"/>
</dbReference>
<dbReference type="Proteomes" id="UP000000998">
    <property type="component" value="Chromosome"/>
</dbReference>
<dbReference type="GO" id="GO:0043824">
    <property type="term" value="F:succinylglutamate-semialdehyde dehydrogenase activity"/>
    <property type="evidence" value="ECO:0007669"/>
    <property type="project" value="UniProtKB-EC"/>
</dbReference>
<dbReference type="GO" id="GO:0019544">
    <property type="term" value="P:arginine catabolic process to glutamate"/>
    <property type="evidence" value="ECO:0007669"/>
    <property type="project" value="UniProtKB-UniRule"/>
</dbReference>
<dbReference type="GO" id="GO:0019545">
    <property type="term" value="P:arginine catabolic process to succinate"/>
    <property type="evidence" value="ECO:0007669"/>
    <property type="project" value="UniProtKB-UniRule"/>
</dbReference>
<dbReference type="CDD" id="cd07095">
    <property type="entry name" value="ALDH_SGSD_AstD"/>
    <property type="match status" value="1"/>
</dbReference>
<dbReference type="FunFam" id="3.40.605.10:FF:000010">
    <property type="entry name" value="N-succinylglutamate 5-semialdehyde dehydrogenase"/>
    <property type="match status" value="1"/>
</dbReference>
<dbReference type="Gene3D" id="3.40.605.10">
    <property type="entry name" value="Aldehyde Dehydrogenase, Chain A, domain 1"/>
    <property type="match status" value="1"/>
</dbReference>
<dbReference type="Gene3D" id="3.40.309.10">
    <property type="entry name" value="Aldehyde Dehydrogenase, Chain A, domain 2"/>
    <property type="match status" value="1"/>
</dbReference>
<dbReference type="HAMAP" id="MF_01174">
    <property type="entry name" value="Aldedh_AstD"/>
    <property type="match status" value="1"/>
</dbReference>
<dbReference type="InterPro" id="IPR016161">
    <property type="entry name" value="Ald_DH/histidinol_DH"/>
</dbReference>
<dbReference type="InterPro" id="IPR016163">
    <property type="entry name" value="Ald_DH_C"/>
</dbReference>
<dbReference type="InterPro" id="IPR016160">
    <property type="entry name" value="Ald_DH_CS_CYS"/>
</dbReference>
<dbReference type="InterPro" id="IPR029510">
    <property type="entry name" value="Ald_DH_CS_GLU"/>
</dbReference>
<dbReference type="InterPro" id="IPR016162">
    <property type="entry name" value="Ald_DH_N"/>
</dbReference>
<dbReference type="InterPro" id="IPR015590">
    <property type="entry name" value="Aldehyde_DH_dom"/>
</dbReference>
<dbReference type="InterPro" id="IPR017649">
    <property type="entry name" value="SuccinylGlu_semiald_DH_AstD"/>
</dbReference>
<dbReference type="NCBIfam" id="TIGR03240">
    <property type="entry name" value="arg_catab_astD"/>
    <property type="match status" value="1"/>
</dbReference>
<dbReference type="NCBIfam" id="NF006992">
    <property type="entry name" value="PRK09457.1"/>
    <property type="match status" value="1"/>
</dbReference>
<dbReference type="PANTHER" id="PTHR11699">
    <property type="entry name" value="ALDEHYDE DEHYDROGENASE-RELATED"/>
    <property type="match status" value="1"/>
</dbReference>
<dbReference type="Pfam" id="PF00171">
    <property type="entry name" value="Aldedh"/>
    <property type="match status" value="1"/>
</dbReference>
<dbReference type="SUPFAM" id="SSF53720">
    <property type="entry name" value="ALDH-like"/>
    <property type="match status" value="1"/>
</dbReference>
<dbReference type="PROSITE" id="PS00070">
    <property type="entry name" value="ALDEHYDE_DEHYDR_CYS"/>
    <property type="match status" value="1"/>
</dbReference>
<dbReference type="PROSITE" id="PS00687">
    <property type="entry name" value="ALDEHYDE_DEHYDR_GLU"/>
    <property type="match status" value="1"/>
</dbReference>
<organism>
    <name type="scientific">Marinobacter nauticus (strain ATCC 700491 / DSM 11845 / VT8)</name>
    <name type="common">Marinobacter aquaeolei</name>
    <dbReference type="NCBI Taxonomy" id="351348"/>
    <lineage>
        <taxon>Bacteria</taxon>
        <taxon>Pseudomonadati</taxon>
        <taxon>Pseudomonadota</taxon>
        <taxon>Gammaproteobacteria</taxon>
        <taxon>Pseudomonadales</taxon>
        <taxon>Marinobacteraceae</taxon>
        <taxon>Marinobacter</taxon>
    </lineage>
</organism>
<comment type="function">
    <text evidence="1">Catalyzes the NAD-dependent reduction of succinylglutamate semialdehyde into succinylglutamate.</text>
</comment>
<comment type="catalytic activity">
    <reaction evidence="1">
        <text>N-succinyl-L-glutamate 5-semialdehyde + NAD(+) + H2O = N-succinyl-L-glutamate + NADH + 2 H(+)</text>
        <dbReference type="Rhea" id="RHEA:10812"/>
        <dbReference type="ChEBI" id="CHEBI:15377"/>
        <dbReference type="ChEBI" id="CHEBI:15378"/>
        <dbReference type="ChEBI" id="CHEBI:57540"/>
        <dbReference type="ChEBI" id="CHEBI:57945"/>
        <dbReference type="ChEBI" id="CHEBI:58520"/>
        <dbReference type="ChEBI" id="CHEBI:58763"/>
        <dbReference type="EC" id="1.2.1.71"/>
    </reaction>
</comment>
<comment type="pathway">
    <text evidence="1">Amino-acid degradation; L-arginine degradation via AST pathway; L-glutamate and succinate from L-arginine: step 4/5.</text>
</comment>
<comment type="similarity">
    <text evidence="1">Belongs to the aldehyde dehydrogenase family. AstD subfamily.</text>
</comment>
<protein>
    <recommendedName>
        <fullName evidence="1">N-succinylglutamate 5-semialdehyde dehydrogenase</fullName>
        <ecNumber evidence="1">1.2.1.71</ecNumber>
    </recommendedName>
    <alternativeName>
        <fullName evidence="1">Succinylglutamic semialdehyde dehydrogenase</fullName>
        <shortName evidence="1">SGSD</shortName>
    </alternativeName>
</protein>
<feature type="chain" id="PRO_1000138051" description="N-succinylglutamate 5-semialdehyde dehydrogenase">
    <location>
        <begin position="1"/>
        <end position="491"/>
    </location>
</feature>
<feature type="active site" evidence="1">
    <location>
        <position position="248"/>
    </location>
</feature>
<feature type="active site" evidence="1">
    <location>
        <position position="282"/>
    </location>
</feature>
<feature type="binding site" evidence="1">
    <location>
        <begin position="225"/>
        <end position="230"/>
    </location>
    <ligand>
        <name>NAD(+)</name>
        <dbReference type="ChEBI" id="CHEBI:57540"/>
    </ligand>
</feature>
<feature type="strand" evidence="2">
    <location>
        <begin position="8"/>
        <end position="10"/>
    </location>
</feature>
<feature type="strand" evidence="2">
    <location>
        <begin position="13"/>
        <end position="15"/>
    </location>
</feature>
<feature type="strand" evidence="2">
    <location>
        <begin position="21"/>
        <end position="25"/>
    </location>
</feature>
<feature type="turn" evidence="2">
    <location>
        <begin position="27"/>
        <end position="29"/>
    </location>
</feature>
<feature type="strand" evidence="2">
    <location>
        <begin position="32"/>
        <end position="37"/>
    </location>
</feature>
<feature type="helix" evidence="2">
    <location>
        <begin position="41"/>
        <end position="58"/>
    </location>
</feature>
<feature type="helix" evidence="2">
    <location>
        <begin position="63"/>
        <end position="79"/>
    </location>
</feature>
<feature type="helix" evidence="2">
    <location>
        <begin position="81"/>
        <end position="92"/>
    </location>
</feature>
<feature type="helix" evidence="2">
    <location>
        <begin position="96"/>
        <end position="120"/>
    </location>
</feature>
<feature type="strand" evidence="2">
    <location>
        <begin position="124"/>
        <end position="128"/>
    </location>
</feature>
<feature type="strand" evidence="2">
    <location>
        <begin position="131"/>
        <end position="139"/>
    </location>
</feature>
<feature type="strand" evidence="2">
    <location>
        <begin position="141"/>
        <end position="146"/>
    </location>
</feature>
<feature type="strand" evidence="2">
    <location>
        <begin position="149"/>
        <end position="151"/>
    </location>
</feature>
<feature type="helix" evidence="2">
    <location>
        <begin position="154"/>
        <end position="165"/>
    </location>
</feature>
<feature type="strand" evidence="2">
    <location>
        <begin position="169"/>
        <end position="173"/>
    </location>
</feature>
<feature type="helix" evidence="2">
    <location>
        <begin position="179"/>
        <end position="191"/>
    </location>
</feature>
<feature type="strand" evidence="2">
    <location>
        <begin position="198"/>
        <end position="201"/>
    </location>
</feature>
<feature type="helix" evidence="2">
    <location>
        <begin position="206"/>
        <end position="213"/>
    </location>
</feature>
<feature type="strand" evidence="2">
    <location>
        <begin position="219"/>
        <end position="225"/>
    </location>
</feature>
<feature type="helix" evidence="2">
    <location>
        <begin position="227"/>
        <end position="236"/>
    </location>
</feature>
<feature type="turn" evidence="2">
    <location>
        <begin position="237"/>
        <end position="239"/>
    </location>
</feature>
<feature type="strand" evidence="2">
    <location>
        <begin position="243"/>
        <end position="248"/>
    </location>
</feature>
<feature type="strand" evidence="2">
    <location>
        <begin position="253"/>
        <end position="257"/>
    </location>
</feature>
<feature type="helix" evidence="2">
    <location>
        <begin position="263"/>
        <end position="275"/>
    </location>
</feature>
<feature type="helix" evidence="2">
    <location>
        <begin position="276"/>
        <end position="279"/>
    </location>
</feature>
<feature type="strand" evidence="2">
    <location>
        <begin position="285"/>
        <end position="293"/>
    </location>
</feature>
<feature type="helix" evidence="2">
    <location>
        <begin position="294"/>
        <end position="307"/>
    </location>
</feature>
<feature type="helix" evidence="2">
    <location>
        <begin position="329"/>
        <end position="344"/>
    </location>
</feature>
<feature type="strand" evidence="2">
    <location>
        <begin position="348"/>
        <end position="351"/>
    </location>
</feature>
<feature type="strand" evidence="2">
    <location>
        <begin position="355"/>
        <end position="357"/>
    </location>
</feature>
<feature type="strand" evidence="2">
    <location>
        <begin position="366"/>
        <end position="369"/>
    </location>
</feature>
<feature type="strand" evidence="2">
    <location>
        <begin position="382"/>
        <end position="392"/>
    </location>
</feature>
<feature type="helix" evidence="2">
    <location>
        <begin position="393"/>
        <end position="400"/>
    </location>
</feature>
<feature type="strand" evidence="2">
    <location>
        <begin position="407"/>
        <end position="412"/>
    </location>
</feature>
<feature type="helix" evidence="2">
    <location>
        <begin position="416"/>
        <end position="425"/>
    </location>
</feature>
<feature type="strand" evidence="2">
    <location>
        <begin position="429"/>
        <end position="435"/>
    </location>
</feature>
<feature type="strand" evidence="3">
    <location>
        <begin position="437"/>
        <end position="439"/>
    </location>
</feature>
<feature type="strand" evidence="2">
    <location>
        <begin position="444"/>
        <end position="446"/>
    </location>
</feature>
<feature type="helix" evidence="2">
    <location>
        <begin position="450"/>
        <end position="452"/>
    </location>
</feature>
<feature type="strand" evidence="2">
    <location>
        <begin position="453"/>
        <end position="455"/>
    </location>
</feature>
<feature type="helix" evidence="2">
    <location>
        <begin position="462"/>
        <end position="466"/>
    </location>
</feature>
<feature type="strand" evidence="2">
    <location>
        <begin position="467"/>
        <end position="474"/>
    </location>
</feature>
<reference key="1">
    <citation type="journal article" date="2011" name="Appl. Environ. Microbiol.">
        <title>Genomic potential of Marinobacter aquaeolei, a biogeochemical 'opportunitroph'.</title>
        <authorList>
            <person name="Singer E."/>
            <person name="Webb E.A."/>
            <person name="Nelson W.C."/>
            <person name="Heidelberg J.F."/>
            <person name="Ivanova N."/>
            <person name="Pati A."/>
            <person name="Edwards K.J."/>
        </authorList>
    </citation>
    <scope>NUCLEOTIDE SEQUENCE [LARGE SCALE GENOMIC DNA]</scope>
    <source>
        <strain>ATCC 700491 / DSM 11845 / VT8</strain>
    </source>
</reference>
<proteinExistence type="evidence at protein level"/>
<keyword id="KW-0002">3D-structure</keyword>
<keyword id="KW-0056">Arginine metabolism</keyword>
<keyword id="KW-0520">NAD</keyword>
<keyword id="KW-0560">Oxidoreductase</keyword>
<name>ASTD_MARN8</name>
<gene>
    <name evidence="1" type="primary">astD</name>
    <name type="ordered locus">Maqu_3316</name>
</gene>
<evidence type="ECO:0000255" key="1">
    <source>
        <dbReference type="HAMAP-Rule" id="MF_01174"/>
    </source>
</evidence>
<evidence type="ECO:0007829" key="2">
    <source>
        <dbReference type="PDB" id="5U0L"/>
    </source>
</evidence>
<evidence type="ECO:0007829" key="3">
    <source>
        <dbReference type="PDB" id="5U0M"/>
    </source>
</evidence>
<accession>A1U5W8</accession>